<protein>
    <recommendedName>
        <fullName evidence="1">DNA topoisomerase 4 subunit A</fullName>
        <ecNumber evidence="1">5.6.2.2</ecNumber>
    </recommendedName>
    <alternativeName>
        <fullName evidence="1">Topoisomerase IV subunit A</fullName>
    </alternativeName>
</protein>
<reference key="1">
    <citation type="journal article" date="1996" name="Nucleic Acids Res.">
        <title>Complete sequence analysis of the genome of the bacterium Mycoplasma pneumoniae.</title>
        <authorList>
            <person name="Himmelreich R."/>
            <person name="Hilbert H."/>
            <person name="Plagens H."/>
            <person name="Pirkl E."/>
            <person name="Li B.-C."/>
            <person name="Herrmann R."/>
        </authorList>
    </citation>
    <scope>NUCLEOTIDE SEQUENCE [LARGE SCALE GENOMIC DNA]</scope>
    <source>
        <strain>ATCC 29342 / M129 / Subtype 1</strain>
    </source>
</reference>
<evidence type="ECO:0000255" key="1">
    <source>
        <dbReference type="HAMAP-Rule" id="MF_00937"/>
    </source>
</evidence>
<evidence type="ECO:0000255" key="2">
    <source>
        <dbReference type="PROSITE-ProRule" id="PRU01384"/>
    </source>
</evidence>
<feature type="chain" id="PRO_0000145402" description="DNA topoisomerase 4 subunit A">
    <location>
        <begin position="1"/>
        <end position="789"/>
    </location>
</feature>
<feature type="domain" description="Topo IIA-type catalytic" evidence="2">
    <location>
        <begin position="34"/>
        <end position="499"/>
    </location>
</feature>
<feature type="active site" description="O-(5'-phospho-DNA)-tyrosine intermediate" evidence="1">
    <location>
        <position position="122"/>
    </location>
</feature>
<feature type="site" description="Interaction with DNA" evidence="1">
    <location>
        <position position="42"/>
    </location>
</feature>
<feature type="site" description="Interaction with DNA" evidence="1">
    <location>
        <position position="78"/>
    </location>
</feature>
<feature type="site" description="Interaction with DNA" evidence="1">
    <location>
        <position position="80"/>
    </location>
</feature>
<feature type="site" description="Interaction with DNA" evidence="1">
    <location>
        <position position="91"/>
    </location>
</feature>
<feature type="site" description="Interaction with DNA" evidence="1">
    <location>
        <position position="97"/>
    </location>
</feature>
<feature type="site" description="Transition state stabilizer" evidence="1">
    <location>
        <position position="121"/>
    </location>
</feature>
<accession>P75352</accession>
<comment type="function">
    <text evidence="1">Topoisomerase IV is essential for chromosome segregation. It relaxes supercoiled DNA. Performs the decatenation events required during the replication of a circular DNA molecule.</text>
</comment>
<comment type="catalytic activity">
    <reaction evidence="1">
        <text>ATP-dependent breakage, passage and rejoining of double-stranded DNA.</text>
        <dbReference type="EC" id="5.6.2.2"/>
    </reaction>
</comment>
<comment type="subunit">
    <text evidence="1">Heterotetramer composed of ParC and ParE.</text>
</comment>
<comment type="subcellular location">
    <subcellularLocation>
        <location evidence="1">Cell membrane</location>
        <topology evidence="1">Peripheral membrane protein</topology>
    </subcellularLocation>
</comment>
<comment type="similarity">
    <text evidence="1">Belongs to the type II topoisomerase GyrA/ParC subunit family. ParC type 2 subfamily.</text>
</comment>
<dbReference type="EC" id="5.6.2.2" evidence="1"/>
<dbReference type="EMBL" id="U00089">
    <property type="protein sequence ID" value="AAB95679.1"/>
    <property type="molecule type" value="Genomic_DNA"/>
</dbReference>
<dbReference type="PIR" id="S73357">
    <property type="entry name" value="S73357"/>
</dbReference>
<dbReference type="RefSeq" id="NP_109811.1">
    <property type="nucleotide sequence ID" value="NC_000912.1"/>
</dbReference>
<dbReference type="RefSeq" id="WP_010874480.1">
    <property type="nucleotide sequence ID" value="NZ_OU342337.1"/>
</dbReference>
<dbReference type="SMR" id="P75352"/>
<dbReference type="IntAct" id="P75352">
    <property type="interactions" value="1"/>
</dbReference>
<dbReference type="STRING" id="272634.MPN_123"/>
<dbReference type="EnsemblBacteria" id="AAB95679">
    <property type="protein sequence ID" value="AAB95679"/>
    <property type="gene ID" value="MPN_123"/>
</dbReference>
<dbReference type="KEGG" id="mpn:MPN_123"/>
<dbReference type="PATRIC" id="fig|272634.6.peg.130"/>
<dbReference type="HOGENOM" id="CLU_002977_4_1_14"/>
<dbReference type="OrthoDB" id="9806486at2"/>
<dbReference type="BioCyc" id="MPNE272634:G1GJ3-204-MONOMER"/>
<dbReference type="Proteomes" id="UP000000808">
    <property type="component" value="Chromosome"/>
</dbReference>
<dbReference type="GO" id="GO:0005694">
    <property type="term" value="C:chromosome"/>
    <property type="evidence" value="ECO:0007669"/>
    <property type="project" value="InterPro"/>
</dbReference>
<dbReference type="GO" id="GO:0005737">
    <property type="term" value="C:cytoplasm"/>
    <property type="evidence" value="ECO:0007669"/>
    <property type="project" value="TreeGrafter"/>
</dbReference>
<dbReference type="GO" id="GO:0009330">
    <property type="term" value="C:DNA topoisomerase type II (double strand cut, ATP-hydrolyzing) complex"/>
    <property type="evidence" value="ECO:0007669"/>
    <property type="project" value="TreeGrafter"/>
</dbReference>
<dbReference type="GO" id="GO:0005886">
    <property type="term" value="C:plasma membrane"/>
    <property type="evidence" value="ECO:0007669"/>
    <property type="project" value="UniProtKB-SubCell"/>
</dbReference>
<dbReference type="GO" id="GO:0005524">
    <property type="term" value="F:ATP binding"/>
    <property type="evidence" value="ECO:0007669"/>
    <property type="project" value="InterPro"/>
</dbReference>
<dbReference type="GO" id="GO:0003677">
    <property type="term" value="F:DNA binding"/>
    <property type="evidence" value="ECO:0007669"/>
    <property type="project" value="UniProtKB-KW"/>
</dbReference>
<dbReference type="GO" id="GO:0034335">
    <property type="term" value="F:DNA negative supercoiling activity"/>
    <property type="evidence" value="ECO:0007669"/>
    <property type="project" value="UniProtKB-ARBA"/>
</dbReference>
<dbReference type="GO" id="GO:0006265">
    <property type="term" value="P:DNA topological change"/>
    <property type="evidence" value="ECO:0007669"/>
    <property type="project" value="InterPro"/>
</dbReference>
<dbReference type="CDD" id="cd00187">
    <property type="entry name" value="TOP4c"/>
    <property type="match status" value="1"/>
</dbReference>
<dbReference type="Gene3D" id="3.30.1360.40">
    <property type="match status" value="1"/>
</dbReference>
<dbReference type="Gene3D" id="2.120.10.90">
    <property type="entry name" value="DNA gyrase/topoisomerase IV, subunit A, C-terminal"/>
    <property type="match status" value="1"/>
</dbReference>
<dbReference type="Gene3D" id="3.90.199.10">
    <property type="entry name" value="Topoisomerase II, domain 5"/>
    <property type="match status" value="1"/>
</dbReference>
<dbReference type="Gene3D" id="1.10.268.10">
    <property type="entry name" value="Topoisomerase, domain 3"/>
    <property type="match status" value="1"/>
</dbReference>
<dbReference type="HAMAP" id="MF_00937">
    <property type="entry name" value="ParC_type2"/>
    <property type="match status" value="1"/>
</dbReference>
<dbReference type="InterPro" id="IPR006691">
    <property type="entry name" value="GyrA/parC_rep"/>
</dbReference>
<dbReference type="InterPro" id="IPR035516">
    <property type="entry name" value="Gyrase/topoIV_suA_C"/>
</dbReference>
<dbReference type="InterPro" id="IPR013760">
    <property type="entry name" value="Topo_IIA-like_dom_sf"/>
</dbReference>
<dbReference type="InterPro" id="IPR013758">
    <property type="entry name" value="Topo_IIA_A/C_ab"/>
</dbReference>
<dbReference type="InterPro" id="IPR013757">
    <property type="entry name" value="Topo_IIA_A_a_sf"/>
</dbReference>
<dbReference type="InterPro" id="IPR002205">
    <property type="entry name" value="Topo_IIA_dom_A"/>
</dbReference>
<dbReference type="InterPro" id="IPR005741">
    <property type="entry name" value="TopoIV_A_Gpos"/>
</dbReference>
<dbReference type="InterPro" id="IPR050220">
    <property type="entry name" value="Type_II_DNA_Topoisomerases"/>
</dbReference>
<dbReference type="NCBIfam" id="TIGR01061">
    <property type="entry name" value="parC_Gpos"/>
    <property type="match status" value="1"/>
</dbReference>
<dbReference type="NCBIfam" id="NF004044">
    <property type="entry name" value="PRK05561.1"/>
    <property type="match status" value="1"/>
</dbReference>
<dbReference type="PANTHER" id="PTHR43493">
    <property type="entry name" value="DNA GYRASE/TOPOISOMERASE SUBUNIT A"/>
    <property type="match status" value="1"/>
</dbReference>
<dbReference type="PANTHER" id="PTHR43493:SF9">
    <property type="entry name" value="DNA TOPOISOMERASE 4 SUBUNIT A"/>
    <property type="match status" value="1"/>
</dbReference>
<dbReference type="Pfam" id="PF03989">
    <property type="entry name" value="DNA_gyraseA_C"/>
    <property type="match status" value="4"/>
</dbReference>
<dbReference type="Pfam" id="PF00521">
    <property type="entry name" value="DNA_topoisoIV"/>
    <property type="match status" value="1"/>
</dbReference>
<dbReference type="SMART" id="SM00434">
    <property type="entry name" value="TOP4c"/>
    <property type="match status" value="1"/>
</dbReference>
<dbReference type="SUPFAM" id="SSF101904">
    <property type="entry name" value="GyrA/ParC C-terminal domain-like"/>
    <property type="match status" value="1"/>
</dbReference>
<dbReference type="SUPFAM" id="SSF56719">
    <property type="entry name" value="Type II DNA topoisomerase"/>
    <property type="match status" value="1"/>
</dbReference>
<dbReference type="PROSITE" id="PS52040">
    <property type="entry name" value="TOPO_IIA"/>
    <property type="match status" value="1"/>
</dbReference>
<gene>
    <name evidence="1" type="primary">parC</name>
    <name type="ordered locus">MPN_123</name>
    <name type="ORF">MP031</name>
</gene>
<sequence>MEKNKQALLLQAIEDVFAFSFSKYAKYIIQDRALPDLRDGLKPVQRRILYGMYQMGLKPTSPYKKSARAVGEIMGKYHPHGDASIYDAIVRMSQAWKNNLTTISIHGNNGSIDGDNAAAMRYTEARLSPYGFELLKDIEKQLVPFVNNFDDSEVEPSVLPTLLPNLFINGTSGIAAGYATNIAPHNVGELLDGLSYRIENPDCDLKAILKIVKGPDFPTGGLVYFEQELANIYQTGKGKFVIQAKYETNTAFGQNQIVITEIPYETVKANIVKQIEELISDNKLSALESVIDSSDRSGIRIIINHKDFLSADKIMAFLFKHTQLQVNFNLNNTVIANRCPVRVGLLAYFDQFLAFAHELIINSAKYDLALANKRLEIIKGLIKAVSMIDEIIRLIRRATDKQDAKTKLIDKYAFTLNQAEAIVSLRLYQLTNTDIKVLFAEQKELEQTIQTAERLIAKPQARNQLLQAQFFQYKKQFNQPRRAQIVGLIEKQKVQDSDFIEHKEVGLLISHDGIYFKFEPEQLAKHLVEFKSEQDQLIFGGVVQNSDYFFMVTSLGNIITVPIYKTLSNTKTKMNELLAKKPILMEDEKLVLAGIVNPDKMEQQLLVLTSQCGMVKRVELSKVINTKQIKSSCCMALRERDKLVNAFVQTKGEPKLVCLVSSSNSFATFLAEEIPIISNKGIGVKGIKLKAEEKVRFAMPLQDNDALVVINSDGGVYNFEVVELAVASRMSVGKKLIPKTKTPVSCFAANKHSEIIGHRGKNGSDLFTLNELNRLPKSTVSQMRLFKWS</sequence>
<organism>
    <name type="scientific">Mycoplasma pneumoniae (strain ATCC 29342 / M129 / Subtype 1)</name>
    <name type="common">Mycoplasmoides pneumoniae</name>
    <dbReference type="NCBI Taxonomy" id="272634"/>
    <lineage>
        <taxon>Bacteria</taxon>
        <taxon>Bacillati</taxon>
        <taxon>Mycoplasmatota</taxon>
        <taxon>Mycoplasmoidales</taxon>
        <taxon>Mycoplasmoidaceae</taxon>
        <taxon>Mycoplasmoides</taxon>
    </lineage>
</organism>
<proteinExistence type="inferred from homology"/>
<keyword id="KW-1003">Cell membrane</keyword>
<keyword id="KW-0238">DNA-binding</keyword>
<keyword id="KW-0413">Isomerase</keyword>
<keyword id="KW-0472">Membrane</keyword>
<keyword id="KW-1185">Reference proteome</keyword>
<keyword id="KW-0799">Topoisomerase</keyword>
<name>PARC_MYCPN</name>